<proteinExistence type="evidence at transcript level"/>
<comment type="tissue specificity">
    <text>Muscle specific.</text>
</comment>
<comment type="similarity">
    <text evidence="3">Belongs to the calponin family.</text>
</comment>
<protein>
    <recommendedName>
        <fullName>Myophilin</fullName>
    </recommendedName>
</protein>
<dbReference type="EMBL" id="Z29075">
    <property type="protein sequence ID" value="CAA82316.1"/>
    <property type="molecule type" value="mRNA"/>
</dbReference>
<dbReference type="EMBL" id="X95464">
    <property type="protein sequence ID" value="CAA64731.1"/>
    <property type="molecule type" value="mRNA"/>
</dbReference>
<dbReference type="SMR" id="Q24799"/>
<dbReference type="EnsemblMetazoa" id="XM_024497351.1">
    <property type="protein sequence ID" value="XP_024348222.1"/>
    <property type="gene ID" value="GeneID_36343817"/>
</dbReference>
<dbReference type="WBParaSite" id="EgrG_000653900">
    <property type="protein sequence ID" value="EgrG_000653900"/>
    <property type="gene ID" value="EgrG_000653900"/>
</dbReference>
<dbReference type="OrthoDB" id="295033at2759"/>
<dbReference type="Proteomes" id="UP000492820">
    <property type="component" value="Unassembled WGS sequence"/>
</dbReference>
<dbReference type="GO" id="GO:0015629">
    <property type="term" value="C:actin cytoskeleton"/>
    <property type="evidence" value="ECO:0007669"/>
    <property type="project" value="TreeGrafter"/>
</dbReference>
<dbReference type="GO" id="GO:0051015">
    <property type="term" value="F:actin filament binding"/>
    <property type="evidence" value="ECO:0007669"/>
    <property type="project" value="TreeGrafter"/>
</dbReference>
<dbReference type="GO" id="GO:0007015">
    <property type="term" value="P:actin filament organization"/>
    <property type="evidence" value="ECO:0007669"/>
    <property type="project" value="TreeGrafter"/>
</dbReference>
<dbReference type="CDD" id="cd21207">
    <property type="entry name" value="CH_dMP20-like"/>
    <property type="match status" value="1"/>
</dbReference>
<dbReference type="Gene3D" id="1.10.418.10">
    <property type="entry name" value="Calponin-like domain"/>
    <property type="match status" value="1"/>
</dbReference>
<dbReference type="InterPro" id="IPR050606">
    <property type="entry name" value="Calponin-like"/>
</dbReference>
<dbReference type="InterPro" id="IPR000557">
    <property type="entry name" value="Calponin_repeat"/>
</dbReference>
<dbReference type="InterPro" id="IPR001715">
    <property type="entry name" value="CH_dom"/>
</dbReference>
<dbReference type="InterPro" id="IPR036872">
    <property type="entry name" value="CH_dom_sf"/>
</dbReference>
<dbReference type="InterPro" id="IPR003096">
    <property type="entry name" value="SM22_calponin"/>
</dbReference>
<dbReference type="PANTHER" id="PTHR47385">
    <property type="entry name" value="CALPONIN"/>
    <property type="match status" value="1"/>
</dbReference>
<dbReference type="PANTHER" id="PTHR47385:SF24">
    <property type="entry name" value="MUSCLE-SPECIFIC PROTEIN 20"/>
    <property type="match status" value="1"/>
</dbReference>
<dbReference type="Pfam" id="PF00402">
    <property type="entry name" value="Calponin"/>
    <property type="match status" value="1"/>
</dbReference>
<dbReference type="Pfam" id="PF00307">
    <property type="entry name" value="CH"/>
    <property type="match status" value="1"/>
</dbReference>
<dbReference type="PRINTS" id="PR00888">
    <property type="entry name" value="SM22CALPONIN"/>
</dbReference>
<dbReference type="PRINTS" id="PR00890">
    <property type="entry name" value="TRANSGELIN"/>
</dbReference>
<dbReference type="SMART" id="SM00033">
    <property type="entry name" value="CH"/>
    <property type="match status" value="1"/>
</dbReference>
<dbReference type="SUPFAM" id="SSF47576">
    <property type="entry name" value="Calponin-homology domain, CH-domain"/>
    <property type="match status" value="1"/>
</dbReference>
<dbReference type="PROSITE" id="PS01052">
    <property type="entry name" value="CALPONIN_1"/>
    <property type="match status" value="1"/>
</dbReference>
<dbReference type="PROSITE" id="PS51122">
    <property type="entry name" value="CALPONIN_2"/>
    <property type="match status" value="1"/>
</dbReference>
<dbReference type="PROSITE" id="PS50021">
    <property type="entry name" value="CH"/>
    <property type="match status" value="1"/>
</dbReference>
<organism>
    <name type="scientific">Echinococcus granulosus</name>
    <name type="common">Hydatid tapeworm</name>
    <dbReference type="NCBI Taxonomy" id="6210"/>
    <lineage>
        <taxon>Eukaryota</taxon>
        <taxon>Metazoa</taxon>
        <taxon>Spiralia</taxon>
        <taxon>Lophotrochozoa</taxon>
        <taxon>Platyhelminthes</taxon>
        <taxon>Cestoda</taxon>
        <taxon>Eucestoda</taxon>
        <taxon>Cyclophyllidea</taxon>
        <taxon>Taeniidae</taxon>
        <taxon>Echinococcus</taxon>
        <taxon>Echinococcus granulosus group</taxon>
    </lineage>
</organism>
<evidence type="ECO:0000255" key="1">
    <source>
        <dbReference type="PROSITE-ProRule" id="PRU00044"/>
    </source>
</evidence>
<evidence type="ECO:0000256" key="2">
    <source>
        <dbReference type="SAM" id="MobiDB-lite"/>
    </source>
</evidence>
<evidence type="ECO:0000305" key="3"/>
<reference key="1">
    <citation type="journal article" date="1995" name="Mol. Biochem. Parasitol.">
        <title>Identification and characterization of myophilin, a muscle-specific antigen of Echinococcus granulosus.</title>
        <authorList>
            <person name="Martin R.M."/>
            <person name="Gasser R.B."/>
            <person name="Lightowlers M.W."/>
            <person name="Jones M.K."/>
        </authorList>
    </citation>
    <scope>NUCLEOTIDE SEQUENCE [MRNA]</scope>
</reference>
<reference key="2">
    <citation type="submission" date="1996-01" db="EMBL/GenBank/DDBJ databases">
        <authorList>
            <person name="Martin R.M."/>
            <person name="Gasser R.B."/>
            <person name="Felleisen R."/>
            <person name="Lightowlers M.W."/>
        </authorList>
    </citation>
    <scope>NUCLEOTIDE SEQUENCE [MRNA] OF 60-190</scope>
</reference>
<accession>Q24799</accession>
<accession>Q24897</accession>
<feature type="chain" id="PRO_0000204791" description="Myophilin">
    <location>
        <begin position="1"/>
        <end position="190"/>
    </location>
</feature>
<feature type="domain" description="Calponin-homology (CH)" evidence="1">
    <location>
        <begin position="24"/>
        <end position="130"/>
    </location>
</feature>
<feature type="repeat" description="Calponin-like">
    <location>
        <begin position="165"/>
        <end position="189"/>
    </location>
</feature>
<feature type="region of interest" description="Disordered" evidence="2">
    <location>
        <begin position="1"/>
        <end position="23"/>
    </location>
</feature>
<feature type="sequence conflict" description="In Ref. 2; CAA64731." evidence="3" ref="2">
    <original>G</original>
    <variation>V</variation>
    <location>
        <position position="96"/>
    </location>
</feature>
<sequence>MSNVPPPSGLSYQVKKKLEGKRDKDQENEALEWIEALTGLKLDRSKLYEDILKDGTVLCKLMNSIKPGCIKKINENATMPFKIMENISAFLEAMKGYGVPVADLFQTVDLFEKKDIAQVTRTLFALGRTCQTHPEYSGPVLGPKLATENKREFTEQQLREGQNVVSLQYGSNKGASQAGINMGKQRMIMD</sequence>
<name>MYPH_ECHGR</name>